<comment type="function">
    <text evidence="1">Increases the formation of ribosomal termination complexes and stimulates activities of RF-1 and RF-2. It binds guanine nucleotides and has strong preference for UGA stop codons. It may interact directly with the ribosome. The stimulation of RF-1 and RF-2 is significantly reduced by GTP and GDP, but not by GMP.</text>
</comment>
<comment type="subcellular location">
    <subcellularLocation>
        <location evidence="1">Cytoplasm</location>
    </subcellularLocation>
</comment>
<comment type="similarity">
    <text evidence="1">Belongs to the TRAFAC class translation factor GTPase superfamily. Classic translation factor GTPase family. PrfC subfamily.</text>
</comment>
<organism>
    <name type="scientific">Dechloromonas aromatica (strain RCB)</name>
    <dbReference type="NCBI Taxonomy" id="159087"/>
    <lineage>
        <taxon>Bacteria</taxon>
        <taxon>Pseudomonadati</taxon>
        <taxon>Pseudomonadota</taxon>
        <taxon>Betaproteobacteria</taxon>
        <taxon>Rhodocyclales</taxon>
        <taxon>Azonexaceae</taxon>
        <taxon>Dechloromonas</taxon>
    </lineage>
</organism>
<feature type="chain" id="PRO_0000242172" description="Peptide chain release factor 3">
    <location>
        <begin position="1"/>
        <end position="524"/>
    </location>
</feature>
<feature type="domain" description="tr-type G">
    <location>
        <begin position="9"/>
        <end position="275"/>
    </location>
</feature>
<feature type="binding site" evidence="1">
    <location>
        <begin position="18"/>
        <end position="25"/>
    </location>
    <ligand>
        <name>GTP</name>
        <dbReference type="ChEBI" id="CHEBI:37565"/>
    </ligand>
</feature>
<feature type="binding site" evidence="1">
    <location>
        <begin position="86"/>
        <end position="90"/>
    </location>
    <ligand>
        <name>GTP</name>
        <dbReference type="ChEBI" id="CHEBI:37565"/>
    </ligand>
</feature>
<feature type="binding site" evidence="1">
    <location>
        <begin position="140"/>
        <end position="143"/>
    </location>
    <ligand>
        <name>GTP</name>
        <dbReference type="ChEBI" id="CHEBI:37565"/>
    </ligand>
</feature>
<sequence length="524" mass="58395">MTPLDNEISRRRTFAIISHPDAGKTTLTEKLLWFGGAIQVAGEVRARKASRHATSDWMELEKQRGISVTSSVMQFPYRECMINLLDTPGHEDFSEDTYRTLTAVDSAVMVIDSVNGVEAQTIKLLNVCRMRDTPILTFINKLDREGKEPIDLLDEIESVLGIQCAPMTWPIGMGKRFRGVYHLYDDAIAFFDPQAEKGTAEIIQGLDNPRLDELIGTQADELRMDIELVRGASHAFDAEAYLSGKQSPVFFGSAVNNFGVQSLLDAVVDLSPPPIARPSVSREVLPNEPKFSGFVFKIQANMDPKHRDRIAFLRVCSGRFDRGMKVKQVASGKMLSINNAITFMARDRSTTDEAWPGDIIGIPNHGTIRLGETFTEGEDLRFTGIPSFAPEHFRLARIANPLKIKQLQKGLQQLAEEGATQLFRPLSGTDLILGAVGTLQFDVVASRLENEYGVQVIFEHYNCATARWIHGDAAELRQLSDRYSANVALDGADDPVYLAPNNVYLNMVKEKYPNLRFLEAREVA</sequence>
<protein>
    <recommendedName>
        <fullName evidence="1">Peptide chain release factor 3</fullName>
        <shortName evidence="1">RF-3</shortName>
    </recommendedName>
</protein>
<gene>
    <name evidence="1" type="primary">prfC</name>
    <name type="ordered locus">Daro_2730</name>
</gene>
<dbReference type="EMBL" id="CP000089">
    <property type="protein sequence ID" value="AAZ47460.1"/>
    <property type="molecule type" value="Genomic_DNA"/>
</dbReference>
<dbReference type="SMR" id="Q47CH1"/>
<dbReference type="STRING" id="159087.Daro_2730"/>
<dbReference type="KEGG" id="dar:Daro_2730"/>
<dbReference type="eggNOG" id="COG4108">
    <property type="taxonomic scope" value="Bacteria"/>
</dbReference>
<dbReference type="HOGENOM" id="CLU_002794_2_1_4"/>
<dbReference type="OrthoDB" id="9804431at2"/>
<dbReference type="GO" id="GO:0005829">
    <property type="term" value="C:cytosol"/>
    <property type="evidence" value="ECO:0007669"/>
    <property type="project" value="TreeGrafter"/>
</dbReference>
<dbReference type="GO" id="GO:0005525">
    <property type="term" value="F:GTP binding"/>
    <property type="evidence" value="ECO:0007669"/>
    <property type="project" value="UniProtKB-UniRule"/>
</dbReference>
<dbReference type="GO" id="GO:0003924">
    <property type="term" value="F:GTPase activity"/>
    <property type="evidence" value="ECO:0007669"/>
    <property type="project" value="InterPro"/>
</dbReference>
<dbReference type="GO" id="GO:0016150">
    <property type="term" value="F:translation release factor activity, codon nonspecific"/>
    <property type="evidence" value="ECO:0007669"/>
    <property type="project" value="TreeGrafter"/>
</dbReference>
<dbReference type="GO" id="GO:0016149">
    <property type="term" value="F:translation release factor activity, codon specific"/>
    <property type="evidence" value="ECO:0007669"/>
    <property type="project" value="UniProtKB-UniRule"/>
</dbReference>
<dbReference type="GO" id="GO:0006449">
    <property type="term" value="P:regulation of translational termination"/>
    <property type="evidence" value="ECO:0007669"/>
    <property type="project" value="UniProtKB-UniRule"/>
</dbReference>
<dbReference type="CDD" id="cd04169">
    <property type="entry name" value="RF3"/>
    <property type="match status" value="1"/>
</dbReference>
<dbReference type="CDD" id="cd03689">
    <property type="entry name" value="RF3_II"/>
    <property type="match status" value="1"/>
</dbReference>
<dbReference type="CDD" id="cd16259">
    <property type="entry name" value="RF3_III"/>
    <property type="match status" value="1"/>
</dbReference>
<dbReference type="FunFam" id="3.30.70.3280:FF:000001">
    <property type="entry name" value="Peptide chain release factor 3"/>
    <property type="match status" value="1"/>
</dbReference>
<dbReference type="FunFam" id="3.40.50.300:FF:000542">
    <property type="entry name" value="Peptide chain release factor 3"/>
    <property type="match status" value="1"/>
</dbReference>
<dbReference type="Gene3D" id="3.40.50.300">
    <property type="entry name" value="P-loop containing nucleotide triphosphate hydrolases"/>
    <property type="match status" value="2"/>
</dbReference>
<dbReference type="Gene3D" id="3.30.70.3280">
    <property type="entry name" value="Peptide chain release factor 3, domain III"/>
    <property type="match status" value="1"/>
</dbReference>
<dbReference type="HAMAP" id="MF_00072">
    <property type="entry name" value="Rel_fac_3"/>
    <property type="match status" value="1"/>
</dbReference>
<dbReference type="InterPro" id="IPR053905">
    <property type="entry name" value="EF-G-like_DII"/>
</dbReference>
<dbReference type="InterPro" id="IPR035647">
    <property type="entry name" value="EFG_III/V"/>
</dbReference>
<dbReference type="InterPro" id="IPR031157">
    <property type="entry name" value="G_TR_CS"/>
</dbReference>
<dbReference type="InterPro" id="IPR027417">
    <property type="entry name" value="P-loop_NTPase"/>
</dbReference>
<dbReference type="InterPro" id="IPR004548">
    <property type="entry name" value="PrfC"/>
</dbReference>
<dbReference type="InterPro" id="IPR032090">
    <property type="entry name" value="RF3_C"/>
</dbReference>
<dbReference type="InterPro" id="IPR038467">
    <property type="entry name" value="RF3_dom_3_sf"/>
</dbReference>
<dbReference type="InterPro" id="IPR041732">
    <property type="entry name" value="RF3_GTP-bd"/>
</dbReference>
<dbReference type="InterPro" id="IPR005225">
    <property type="entry name" value="Small_GTP-bd"/>
</dbReference>
<dbReference type="InterPro" id="IPR000795">
    <property type="entry name" value="T_Tr_GTP-bd_dom"/>
</dbReference>
<dbReference type="InterPro" id="IPR009000">
    <property type="entry name" value="Transl_B-barrel_sf"/>
</dbReference>
<dbReference type="NCBIfam" id="TIGR00503">
    <property type="entry name" value="prfC"/>
    <property type="match status" value="1"/>
</dbReference>
<dbReference type="NCBIfam" id="NF001964">
    <property type="entry name" value="PRK00741.1"/>
    <property type="match status" value="1"/>
</dbReference>
<dbReference type="NCBIfam" id="TIGR00231">
    <property type="entry name" value="small_GTP"/>
    <property type="match status" value="1"/>
</dbReference>
<dbReference type="PANTHER" id="PTHR43556">
    <property type="entry name" value="PEPTIDE CHAIN RELEASE FACTOR RF3"/>
    <property type="match status" value="1"/>
</dbReference>
<dbReference type="PANTHER" id="PTHR43556:SF2">
    <property type="entry name" value="PEPTIDE CHAIN RELEASE FACTOR RF3"/>
    <property type="match status" value="1"/>
</dbReference>
<dbReference type="Pfam" id="PF22042">
    <property type="entry name" value="EF-G_D2"/>
    <property type="match status" value="1"/>
</dbReference>
<dbReference type="Pfam" id="PF00009">
    <property type="entry name" value="GTP_EFTU"/>
    <property type="match status" value="1"/>
</dbReference>
<dbReference type="Pfam" id="PF16658">
    <property type="entry name" value="RF3_C"/>
    <property type="match status" value="1"/>
</dbReference>
<dbReference type="PRINTS" id="PR00315">
    <property type="entry name" value="ELONGATNFCT"/>
</dbReference>
<dbReference type="SUPFAM" id="SSF54980">
    <property type="entry name" value="EF-G C-terminal domain-like"/>
    <property type="match status" value="1"/>
</dbReference>
<dbReference type="SUPFAM" id="SSF52540">
    <property type="entry name" value="P-loop containing nucleoside triphosphate hydrolases"/>
    <property type="match status" value="1"/>
</dbReference>
<dbReference type="SUPFAM" id="SSF50447">
    <property type="entry name" value="Translation proteins"/>
    <property type="match status" value="1"/>
</dbReference>
<dbReference type="PROSITE" id="PS00301">
    <property type="entry name" value="G_TR_1"/>
    <property type="match status" value="1"/>
</dbReference>
<dbReference type="PROSITE" id="PS51722">
    <property type="entry name" value="G_TR_2"/>
    <property type="match status" value="1"/>
</dbReference>
<reference key="1">
    <citation type="journal article" date="2009" name="BMC Genomics">
        <title>Metabolic analysis of the soil microbe Dechloromonas aromatica str. RCB: indications of a surprisingly complex life-style and cryptic anaerobic pathways for aromatic degradation.</title>
        <authorList>
            <person name="Salinero K.K."/>
            <person name="Keller K."/>
            <person name="Feil W.S."/>
            <person name="Feil H."/>
            <person name="Trong S."/>
            <person name="Di Bartolo G."/>
            <person name="Lapidus A."/>
        </authorList>
    </citation>
    <scope>NUCLEOTIDE SEQUENCE [LARGE SCALE GENOMIC DNA]</scope>
    <source>
        <strain>RCB</strain>
    </source>
</reference>
<keyword id="KW-0963">Cytoplasm</keyword>
<keyword id="KW-0342">GTP-binding</keyword>
<keyword id="KW-0547">Nucleotide-binding</keyword>
<keyword id="KW-0648">Protein biosynthesis</keyword>
<evidence type="ECO:0000255" key="1">
    <source>
        <dbReference type="HAMAP-Rule" id="MF_00072"/>
    </source>
</evidence>
<accession>Q47CH1</accession>
<proteinExistence type="inferred from homology"/>
<name>RF3_DECAR</name>